<reference key="1">
    <citation type="journal article" date="2006" name="Ann. Bot.">
        <title>Proteome profiling of Populus euphratica Oliv. upon heat stress.</title>
        <authorList>
            <person name="Ferreira S."/>
            <person name="Hjernoe K."/>
            <person name="Larsen M."/>
            <person name="Wingsle G."/>
            <person name="Larsen P."/>
            <person name="Fey S."/>
            <person name="Roepstorff P."/>
            <person name="Pais M.S."/>
        </authorList>
    </citation>
    <scope>PROTEIN SEQUENCE</scope>
    <source>
        <tissue>Leaf</tissue>
    </source>
</reference>
<accession>P84543</accession>
<proteinExistence type="evidence at protein level"/>
<organism>
    <name type="scientific">Populus euphratica</name>
    <name type="common">Euphrates poplar</name>
    <dbReference type="NCBI Taxonomy" id="75702"/>
    <lineage>
        <taxon>Eukaryota</taxon>
        <taxon>Viridiplantae</taxon>
        <taxon>Streptophyta</taxon>
        <taxon>Embryophyta</taxon>
        <taxon>Tracheophyta</taxon>
        <taxon>Spermatophyta</taxon>
        <taxon>Magnoliopsida</taxon>
        <taxon>eudicotyledons</taxon>
        <taxon>Gunneridae</taxon>
        <taxon>Pentapetalae</taxon>
        <taxon>rosids</taxon>
        <taxon>fabids</taxon>
        <taxon>Malpighiales</taxon>
        <taxon>Salicaceae</taxon>
        <taxon>Saliceae</taxon>
        <taxon>Populus</taxon>
    </lineage>
</organism>
<evidence type="ECO:0000250" key="1">
    <source>
        <dbReference type="UniProtKB" id="P20115"/>
    </source>
</evidence>
<evidence type="ECO:0000255" key="2"/>
<evidence type="ECO:0000255" key="3">
    <source>
        <dbReference type="PROSITE-ProRule" id="PRU10117"/>
    </source>
</evidence>
<evidence type="ECO:0000305" key="4"/>
<feature type="chain" id="PRO_0000169986" description="Citrate synthase">
    <location>
        <begin position="1" status="less than"/>
        <end position="20" status="greater than"/>
    </location>
</feature>
<feature type="non-consecutive residues" evidence="4">
    <location>
        <begin position="10"/>
        <end position="11"/>
    </location>
</feature>
<feature type="non-terminal residue">
    <location>
        <position position="1"/>
    </location>
</feature>
<feature type="non-terminal residue">
    <location>
        <position position="20"/>
    </location>
</feature>
<protein>
    <recommendedName>
        <fullName>Citrate synthase</fullName>
        <ecNumber>2.3.3.16</ecNumber>
    </recommendedName>
</protein>
<sequence length="20" mass="2280">YYTVLFGVSRALGLPLERPK</sequence>
<dbReference type="EC" id="2.3.3.16"/>
<dbReference type="UniPathway" id="UPA00223">
    <property type="reaction ID" value="UER00717"/>
</dbReference>
<dbReference type="Proteomes" id="UP000694918">
    <property type="component" value="Unplaced"/>
</dbReference>
<dbReference type="GO" id="GO:0036440">
    <property type="term" value="F:citrate synthase activity"/>
    <property type="evidence" value="ECO:0007669"/>
    <property type="project" value="UniProtKB-EC"/>
</dbReference>
<dbReference type="GO" id="GO:0006099">
    <property type="term" value="P:tricarboxylic acid cycle"/>
    <property type="evidence" value="ECO:0007669"/>
    <property type="project" value="UniProtKB-UniPathway"/>
</dbReference>
<keyword id="KW-0903">Direct protein sequencing</keyword>
<keyword id="KW-1185">Reference proteome</keyword>
<keyword id="KW-0808">Transferase</keyword>
<keyword id="KW-0816">Tricarboxylic acid cycle</keyword>
<comment type="catalytic activity">
    <reaction evidence="1 3">
        <text>oxaloacetate + acetyl-CoA + H2O = citrate + CoA + H(+)</text>
        <dbReference type="Rhea" id="RHEA:16845"/>
        <dbReference type="ChEBI" id="CHEBI:15377"/>
        <dbReference type="ChEBI" id="CHEBI:15378"/>
        <dbReference type="ChEBI" id="CHEBI:16452"/>
        <dbReference type="ChEBI" id="CHEBI:16947"/>
        <dbReference type="ChEBI" id="CHEBI:57287"/>
        <dbReference type="ChEBI" id="CHEBI:57288"/>
        <dbReference type="EC" id="2.3.3.16"/>
    </reaction>
</comment>
<comment type="pathway">
    <text>Carbohydrate metabolism; tricarboxylic acid cycle; isocitrate from oxaloacetate: step 1/2.</text>
</comment>
<comment type="subunit">
    <text evidence="1">Homodimer.</text>
</comment>
<comment type="miscellaneous">
    <text evidence="4">Citrate synthase is found in nearly all cells capable of oxidative metabolism.</text>
</comment>
<comment type="similarity">
    <text evidence="2">Belongs to the citrate synthase family.</text>
</comment>
<name>CISY_POPEU</name>